<name>RL7_LATSS</name>
<keyword id="KW-1185">Reference proteome</keyword>
<keyword id="KW-0687">Ribonucleoprotein</keyword>
<keyword id="KW-0689">Ribosomal protein</keyword>
<proteinExistence type="inferred from homology"/>
<accession>Q38V11</accession>
<feature type="chain" id="PRO_0000243439" description="Large ribosomal subunit protein bL12">
    <location>
        <begin position="1"/>
        <end position="122"/>
    </location>
</feature>
<organism>
    <name type="scientific">Latilactobacillus sakei subsp. sakei (strain 23K)</name>
    <name type="common">Lactobacillus sakei subsp. sakei</name>
    <dbReference type="NCBI Taxonomy" id="314315"/>
    <lineage>
        <taxon>Bacteria</taxon>
        <taxon>Bacillati</taxon>
        <taxon>Bacillota</taxon>
        <taxon>Bacilli</taxon>
        <taxon>Lactobacillales</taxon>
        <taxon>Lactobacillaceae</taxon>
        <taxon>Latilactobacillus</taxon>
    </lineage>
</organism>
<protein>
    <recommendedName>
        <fullName evidence="1">Large ribosomal subunit protein bL12</fullName>
    </recommendedName>
    <alternativeName>
        <fullName evidence="2">50S ribosomal protein L7/L12</fullName>
    </alternativeName>
</protein>
<comment type="function">
    <text evidence="1">Forms part of the ribosomal stalk which helps the ribosome interact with GTP-bound translation factors. Is thus essential for accurate translation.</text>
</comment>
<comment type="subunit">
    <text evidence="1">Homodimer. Part of the ribosomal stalk of the 50S ribosomal subunit. Forms a multimeric L10(L12)X complex, where L10 forms an elongated spine to which 2 to 4 L12 dimers bind in a sequential fashion. Binds GTP-bound translation factors.</text>
</comment>
<comment type="similarity">
    <text evidence="1">Belongs to the bacterial ribosomal protein bL12 family.</text>
</comment>
<reference key="1">
    <citation type="journal article" date="2005" name="Nat. Biotechnol.">
        <title>The complete genome sequence of the meat-borne lactic acid bacterium Lactobacillus sakei 23K.</title>
        <authorList>
            <person name="Chaillou S."/>
            <person name="Champomier-Verges M.-C."/>
            <person name="Cornet M."/>
            <person name="Crutz-Le Coq A.-M."/>
            <person name="Dudez A.-M."/>
            <person name="Martin V."/>
            <person name="Beaufils S."/>
            <person name="Darbon-Rongere E."/>
            <person name="Bossy R."/>
            <person name="Loux V."/>
            <person name="Zagorec M."/>
        </authorList>
    </citation>
    <scope>NUCLEOTIDE SEQUENCE [LARGE SCALE GENOMIC DNA]</scope>
    <source>
        <strain>23K</strain>
    </source>
</reference>
<evidence type="ECO:0000255" key="1">
    <source>
        <dbReference type="HAMAP-Rule" id="MF_00368"/>
    </source>
</evidence>
<evidence type="ECO:0000305" key="2"/>
<gene>
    <name evidence="1" type="primary">rplL</name>
    <name type="ordered locus">LCA_1666</name>
</gene>
<sequence>MALDVNAIVDQLKESSILELNDLVKAIEEEFGVSAAAPVAAAGAAGADAAAEKDSFTVELSEIGQEKVKVIKAVREITGLGLKDAKGLVDNAPSALKEDVSKDEAEEMKAKLEEVGAVVNLK</sequence>
<dbReference type="EMBL" id="CR936503">
    <property type="protein sequence ID" value="CAI55973.1"/>
    <property type="molecule type" value="Genomic_DNA"/>
</dbReference>
<dbReference type="RefSeq" id="WP_011375358.1">
    <property type="nucleotide sequence ID" value="NC_007576.1"/>
</dbReference>
<dbReference type="SMR" id="Q38V11"/>
<dbReference type="STRING" id="314315.LCA_1666"/>
<dbReference type="GeneID" id="57132587"/>
<dbReference type="KEGG" id="lsa:LCA_1666"/>
<dbReference type="eggNOG" id="COG0222">
    <property type="taxonomic scope" value="Bacteria"/>
</dbReference>
<dbReference type="HOGENOM" id="CLU_086499_3_2_9"/>
<dbReference type="OrthoDB" id="9811748at2"/>
<dbReference type="Proteomes" id="UP000002707">
    <property type="component" value="Chromosome"/>
</dbReference>
<dbReference type="GO" id="GO:0022625">
    <property type="term" value="C:cytosolic large ribosomal subunit"/>
    <property type="evidence" value="ECO:0007669"/>
    <property type="project" value="TreeGrafter"/>
</dbReference>
<dbReference type="GO" id="GO:0003729">
    <property type="term" value="F:mRNA binding"/>
    <property type="evidence" value="ECO:0007669"/>
    <property type="project" value="TreeGrafter"/>
</dbReference>
<dbReference type="GO" id="GO:0003735">
    <property type="term" value="F:structural constituent of ribosome"/>
    <property type="evidence" value="ECO:0007669"/>
    <property type="project" value="InterPro"/>
</dbReference>
<dbReference type="GO" id="GO:0006412">
    <property type="term" value="P:translation"/>
    <property type="evidence" value="ECO:0007669"/>
    <property type="project" value="UniProtKB-UniRule"/>
</dbReference>
<dbReference type="CDD" id="cd00387">
    <property type="entry name" value="Ribosomal_L7_L12"/>
    <property type="match status" value="1"/>
</dbReference>
<dbReference type="FunFam" id="3.30.1390.10:FF:000001">
    <property type="entry name" value="50S ribosomal protein L7/L12"/>
    <property type="match status" value="1"/>
</dbReference>
<dbReference type="Gene3D" id="3.30.1390.10">
    <property type="match status" value="1"/>
</dbReference>
<dbReference type="Gene3D" id="1.20.5.710">
    <property type="entry name" value="Single helix bin"/>
    <property type="match status" value="1"/>
</dbReference>
<dbReference type="HAMAP" id="MF_00368">
    <property type="entry name" value="Ribosomal_bL12"/>
    <property type="match status" value="1"/>
</dbReference>
<dbReference type="InterPro" id="IPR000206">
    <property type="entry name" value="Ribosomal_bL12"/>
</dbReference>
<dbReference type="InterPro" id="IPR013823">
    <property type="entry name" value="Ribosomal_bL12_C"/>
</dbReference>
<dbReference type="InterPro" id="IPR014719">
    <property type="entry name" value="Ribosomal_bL12_C/ClpS-like"/>
</dbReference>
<dbReference type="InterPro" id="IPR008932">
    <property type="entry name" value="Ribosomal_bL12_oligo"/>
</dbReference>
<dbReference type="InterPro" id="IPR036235">
    <property type="entry name" value="Ribosomal_bL12_oligo_N_sf"/>
</dbReference>
<dbReference type="NCBIfam" id="TIGR00855">
    <property type="entry name" value="L12"/>
    <property type="match status" value="1"/>
</dbReference>
<dbReference type="PANTHER" id="PTHR45987">
    <property type="entry name" value="39S RIBOSOMAL PROTEIN L12"/>
    <property type="match status" value="1"/>
</dbReference>
<dbReference type="PANTHER" id="PTHR45987:SF4">
    <property type="entry name" value="LARGE RIBOSOMAL SUBUNIT PROTEIN BL12M"/>
    <property type="match status" value="1"/>
</dbReference>
<dbReference type="Pfam" id="PF00542">
    <property type="entry name" value="Ribosomal_L12"/>
    <property type="match status" value="1"/>
</dbReference>
<dbReference type="Pfam" id="PF16320">
    <property type="entry name" value="Ribosomal_L12_N"/>
    <property type="match status" value="1"/>
</dbReference>
<dbReference type="SUPFAM" id="SSF54736">
    <property type="entry name" value="ClpS-like"/>
    <property type="match status" value="1"/>
</dbReference>
<dbReference type="SUPFAM" id="SSF48300">
    <property type="entry name" value="Ribosomal protein L7/12, oligomerisation (N-terminal) domain"/>
    <property type="match status" value="1"/>
</dbReference>